<keyword id="KW-0963">Cytoplasm</keyword>
<keyword id="KW-0396">Initiation factor</keyword>
<keyword id="KW-0648">Protein biosynthesis</keyword>
<keyword id="KW-0694">RNA-binding</keyword>
<keyword id="KW-0699">rRNA-binding</keyword>
<feature type="chain" id="PRO_0000263853" description="Translation initiation factor IF-1">
    <location>
        <begin position="1"/>
        <end position="72"/>
    </location>
</feature>
<feature type="domain" description="S1-like" evidence="1">
    <location>
        <begin position="1"/>
        <end position="72"/>
    </location>
</feature>
<comment type="function">
    <text evidence="1">One of the essential components for the initiation of protein synthesis. Stabilizes the binding of IF-2 and IF-3 on the 30S subunit to which N-formylmethionyl-tRNA(fMet) subsequently binds. Helps modulate mRNA selection, yielding the 30S pre-initiation complex (PIC). Upon addition of the 50S ribosomal subunit IF-1, IF-2 and IF-3 are released leaving the mature 70S translation initiation complex.</text>
</comment>
<comment type="subunit">
    <text evidence="1">Component of the 30S ribosomal translation pre-initiation complex which assembles on the 30S ribosome in the order IF-2 and IF-3, IF-1 and N-formylmethionyl-tRNA(fMet); mRNA recruitment can occur at any time during PIC assembly.</text>
</comment>
<comment type="subcellular location">
    <subcellularLocation>
        <location evidence="1">Cytoplasm</location>
    </subcellularLocation>
</comment>
<comment type="similarity">
    <text evidence="1">Belongs to the IF-1 family.</text>
</comment>
<evidence type="ECO:0000255" key="1">
    <source>
        <dbReference type="HAMAP-Rule" id="MF_00075"/>
    </source>
</evidence>
<accession>Q1MLP3</accession>
<organism>
    <name type="scientific">Rhizobium johnstonii (strain DSM 114642 / LMG 32736 / 3841)</name>
    <name type="common">Rhizobium leguminosarum bv. viciae</name>
    <dbReference type="NCBI Taxonomy" id="216596"/>
    <lineage>
        <taxon>Bacteria</taxon>
        <taxon>Pseudomonadati</taxon>
        <taxon>Pseudomonadota</taxon>
        <taxon>Alphaproteobacteria</taxon>
        <taxon>Hyphomicrobiales</taxon>
        <taxon>Rhizobiaceae</taxon>
        <taxon>Rhizobium/Agrobacterium group</taxon>
        <taxon>Rhizobium</taxon>
        <taxon>Rhizobium johnstonii</taxon>
    </lineage>
</organism>
<sequence>MPKEEVLEFPGIVTELLPNATFRVKLENEHEIIAHTAGRMRKNRIRVLAGDKVLVEMTPYDLTKGRITYRFK</sequence>
<reference key="1">
    <citation type="journal article" date="2006" name="Genome Biol.">
        <title>The genome of Rhizobium leguminosarum has recognizable core and accessory components.</title>
        <authorList>
            <person name="Young J.P.W."/>
            <person name="Crossman L.C."/>
            <person name="Johnston A.W.B."/>
            <person name="Thomson N.R."/>
            <person name="Ghazoui Z.F."/>
            <person name="Hull K.H."/>
            <person name="Wexler M."/>
            <person name="Curson A.R.J."/>
            <person name="Todd J.D."/>
            <person name="Poole P.S."/>
            <person name="Mauchline T.H."/>
            <person name="East A.K."/>
            <person name="Quail M.A."/>
            <person name="Churcher C."/>
            <person name="Arrowsmith C."/>
            <person name="Cherevach I."/>
            <person name="Chillingworth T."/>
            <person name="Clarke K."/>
            <person name="Cronin A."/>
            <person name="Davis P."/>
            <person name="Fraser A."/>
            <person name="Hance Z."/>
            <person name="Hauser H."/>
            <person name="Jagels K."/>
            <person name="Moule S."/>
            <person name="Mungall K."/>
            <person name="Norbertczak H."/>
            <person name="Rabbinowitsch E."/>
            <person name="Sanders M."/>
            <person name="Simmonds M."/>
            <person name="Whitehead S."/>
            <person name="Parkhill J."/>
        </authorList>
    </citation>
    <scope>NUCLEOTIDE SEQUENCE [LARGE SCALE GENOMIC DNA]</scope>
    <source>
        <strain>DSM 114642 / LMG 32736 / 3841</strain>
    </source>
</reference>
<dbReference type="EMBL" id="AM236080">
    <property type="protein sequence ID" value="CAK06110.1"/>
    <property type="molecule type" value="Genomic_DNA"/>
</dbReference>
<dbReference type="RefSeq" id="WP_003545338.1">
    <property type="nucleotide sequence ID" value="NC_008380.1"/>
</dbReference>
<dbReference type="SMR" id="Q1MLP3"/>
<dbReference type="EnsemblBacteria" id="CAK06110">
    <property type="protein sequence ID" value="CAK06110"/>
    <property type="gene ID" value="RL0616"/>
</dbReference>
<dbReference type="GeneID" id="91147032"/>
<dbReference type="KEGG" id="rle:RL0616"/>
<dbReference type="eggNOG" id="COG0361">
    <property type="taxonomic scope" value="Bacteria"/>
</dbReference>
<dbReference type="HOGENOM" id="CLU_151267_1_0_5"/>
<dbReference type="Proteomes" id="UP000006575">
    <property type="component" value="Chromosome"/>
</dbReference>
<dbReference type="GO" id="GO:0005829">
    <property type="term" value="C:cytosol"/>
    <property type="evidence" value="ECO:0007669"/>
    <property type="project" value="TreeGrafter"/>
</dbReference>
<dbReference type="GO" id="GO:0043022">
    <property type="term" value="F:ribosome binding"/>
    <property type="evidence" value="ECO:0007669"/>
    <property type="project" value="UniProtKB-UniRule"/>
</dbReference>
<dbReference type="GO" id="GO:0019843">
    <property type="term" value="F:rRNA binding"/>
    <property type="evidence" value="ECO:0007669"/>
    <property type="project" value="UniProtKB-UniRule"/>
</dbReference>
<dbReference type="GO" id="GO:0003743">
    <property type="term" value="F:translation initiation factor activity"/>
    <property type="evidence" value="ECO:0007669"/>
    <property type="project" value="UniProtKB-UniRule"/>
</dbReference>
<dbReference type="CDD" id="cd04451">
    <property type="entry name" value="S1_IF1"/>
    <property type="match status" value="1"/>
</dbReference>
<dbReference type="FunFam" id="2.40.50.140:FF:000002">
    <property type="entry name" value="Translation initiation factor IF-1"/>
    <property type="match status" value="1"/>
</dbReference>
<dbReference type="Gene3D" id="2.40.50.140">
    <property type="entry name" value="Nucleic acid-binding proteins"/>
    <property type="match status" value="1"/>
</dbReference>
<dbReference type="HAMAP" id="MF_00075">
    <property type="entry name" value="IF_1"/>
    <property type="match status" value="1"/>
</dbReference>
<dbReference type="InterPro" id="IPR012340">
    <property type="entry name" value="NA-bd_OB-fold"/>
</dbReference>
<dbReference type="InterPro" id="IPR006196">
    <property type="entry name" value="RNA-binding_domain_S1_IF1"/>
</dbReference>
<dbReference type="InterPro" id="IPR004368">
    <property type="entry name" value="TIF_IF1"/>
</dbReference>
<dbReference type="NCBIfam" id="TIGR00008">
    <property type="entry name" value="infA"/>
    <property type="match status" value="1"/>
</dbReference>
<dbReference type="PANTHER" id="PTHR33370">
    <property type="entry name" value="TRANSLATION INITIATION FACTOR IF-1, CHLOROPLASTIC"/>
    <property type="match status" value="1"/>
</dbReference>
<dbReference type="PANTHER" id="PTHR33370:SF1">
    <property type="entry name" value="TRANSLATION INITIATION FACTOR IF-1, CHLOROPLASTIC"/>
    <property type="match status" value="1"/>
</dbReference>
<dbReference type="Pfam" id="PF01176">
    <property type="entry name" value="eIF-1a"/>
    <property type="match status" value="1"/>
</dbReference>
<dbReference type="SUPFAM" id="SSF50249">
    <property type="entry name" value="Nucleic acid-binding proteins"/>
    <property type="match status" value="1"/>
</dbReference>
<dbReference type="PROSITE" id="PS50832">
    <property type="entry name" value="S1_IF1_TYPE"/>
    <property type="match status" value="1"/>
</dbReference>
<protein>
    <recommendedName>
        <fullName evidence="1">Translation initiation factor IF-1</fullName>
    </recommendedName>
</protein>
<name>IF1_RHIJ3</name>
<proteinExistence type="inferred from homology"/>
<gene>
    <name evidence="1" type="primary">infA</name>
    <name type="ordered locus">RL0616</name>
</gene>